<reference key="1">
    <citation type="journal article" date="2009" name="BMC Genomics">
        <title>Pseudogene accumulation in the evolutionary histories of Salmonella enterica serovars Paratyphi A and Typhi.</title>
        <authorList>
            <person name="Holt K.E."/>
            <person name="Thomson N.R."/>
            <person name="Wain J."/>
            <person name="Langridge G.C."/>
            <person name="Hasan R."/>
            <person name="Bhutta Z.A."/>
            <person name="Quail M.A."/>
            <person name="Norbertczak H."/>
            <person name="Walker D."/>
            <person name="Simmonds M."/>
            <person name="White B."/>
            <person name="Bason N."/>
            <person name="Mungall K."/>
            <person name="Dougan G."/>
            <person name="Parkhill J."/>
        </authorList>
    </citation>
    <scope>NUCLEOTIDE SEQUENCE [LARGE SCALE GENOMIC DNA]</scope>
    <source>
        <strain>AKU_12601</strain>
    </source>
</reference>
<sequence>MIKQPALAQEQYACVYAWLALLFFREVDDEGLIQLQSAEIADWLALLKRQPALAASVALLEQKIAALSLRQDAQLELAADFCGLFLMTDKKSALPYASQYPQQEPGMIKHLLLEAGMEVNDDFKEPTDHLAIYLELLSHLHFSLGESFQQRRMNKLRQKTLSSLLEWLPEFTNNCLKHDPYGFYAALSQLLLAIVRFDDGKEDLSIVAAE</sequence>
<accession>B5BIK2</accession>
<feature type="chain" id="PRO_1000137517" description="Chaperone protein TorD">
    <location>
        <begin position="1"/>
        <end position="210"/>
    </location>
</feature>
<comment type="function">
    <text evidence="1">Involved in the biogenesis of TorA. Acts on TorA before the insertion of the molybdenum cofactor and, as a result, probably favors a conformation of the apoenzyme that is competent for acquiring the cofactor.</text>
</comment>
<comment type="subcellular location">
    <subcellularLocation>
        <location evidence="1">Cytoplasm</location>
    </subcellularLocation>
</comment>
<comment type="similarity">
    <text evidence="1">Belongs to the TorD/DmsD family. TorD subfamily.</text>
</comment>
<evidence type="ECO:0000255" key="1">
    <source>
        <dbReference type="HAMAP-Rule" id="MF_01150"/>
    </source>
</evidence>
<gene>
    <name evidence="1" type="primary">torD</name>
    <name type="ordered locus">SSPA3427</name>
</gene>
<protein>
    <recommendedName>
        <fullName evidence="1">Chaperone protein TorD</fullName>
    </recommendedName>
</protein>
<keyword id="KW-0143">Chaperone</keyword>
<keyword id="KW-0963">Cytoplasm</keyword>
<organism>
    <name type="scientific">Salmonella paratyphi A (strain AKU_12601)</name>
    <dbReference type="NCBI Taxonomy" id="554290"/>
    <lineage>
        <taxon>Bacteria</taxon>
        <taxon>Pseudomonadati</taxon>
        <taxon>Pseudomonadota</taxon>
        <taxon>Gammaproteobacteria</taxon>
        <taxon>Enterobacterales</taxon>
        <taxon>Enterobacteriaceae</taxon>
        <taxon>Salmonella</taxon>
    </lineage>
</organism>
<name>TORD_SALPK</name>
<proteinExistence type="inferred from homology"/>
<dbReference type="EMBL" id="FM200053">
    <property type="protein sequence ID" value="CAR61700.1"/>
    <property type="molecule type" value="Genomic_DNA"/>
</dbReference>
<dbReference type="RefSeq" id="WP_000595421.1">
    <property type="nucleotide sequence ID" value="NC_011147.1"/>
</dbReference>
<dbReference type="SMR" id="B5BIK2"/>
<dbReference type="KEGG" id="sek:SSPA3427"/>
<dbReference type="HOGENOM" id="CLU_077650_4_0_6"/>
<dbReference type="Proteomes" id="UP000001869">
    <property type="component" value="Chromosome"/>
</dbReference>
<dbReference type="GO" id="GO:0005737">
    <property type="term" value="C:cytoplasm"/>
    <property type="evidence" value="ECO:0007669"/>
    <property type="project" value="UniProtKB-SubCell"/>
</dbReference>
<dbReference type="GO" id="GO:0051259">
    <property type="term" value="P:protein complex oligomerization"/>
    <property type="evidence" value="ECO:0007669"/>
    <property type="project" value="InterPro"/>
</dbReference>
<dbReference type="GO" id="GO:0006457">
    <property type="term" value="P:protein folding"/>
    <property type="evidence" value="ECO:0007669"/>
    <property type="project" value="UniProtKB-UniRule"/>
</dbReference>
<dbReference type="Gene3D" id="1.20.120.1820">
    <property type="match status" value="1"/>
</dbReference>
<dbReference type="Gene3D" id="1.20.1280.20">
    <property type="entry name" value="HscB, C-terminal domain"/>
    <property type="match status" value="1"/>
</dbReference>
<dbReference type="HAMAP" id="MF_01150">
    <property type="entry name" value="TorD"/>
    <property type="match status" value="1"/>
</dbReference>
<dbReference type="InterPro" id="IPR023069">
    <property type="entry name" value="Chaperone_TorD"/>
</dbReference>
<dbReference type="InterPro" id="IPR020945">
    <property type="entry name" value="DMSO/NO3_reduct_chaperone"/>
</dbReference>
<dbReference type="InterPro" id="IPR036386">
    <property type="entry name" value="HscB_C_sf"/>
</dbReference>
<dbReference type="InterPro" id="IPR036411">
    <property type="entry name" value="TorD-like_sf"/>
</dbReference>
<dbReference type="InterPro" id="IPR050289">
    <property type="entry name" value="TorD/DmsD_chaperones"/>
</dbReference>
<dbReference type="NCBIfam" id="NF003442">
    <property type="entry name" value="PRK04976.1"/>
    <property type="match status" value="1"/>
</dbReference>
<dbReference type="PANTHER" id="PTHR34227:SF11">
    <property type="entry name" value="CHAPERONE PROTEIN TORD"/>
    <property type="match status" value="1"/>
</dbReference>
<dbReference type="PANTHER" id="PTHR34227">
    <property type="entry name" value="CHAPERONE PROTEIN YCDY"/>
    <property type="match status" value="1"/>
</dbReference>
<dbReference type="Pfam" id="PF02613">
    <property type="entry name" value="Nitrate_red_del"/>
    <property type="match status" value="1"/>
</dbReference>
<dbReference type="SUPFAM" id="SSF89155">
    <property type="entry name" value="TorD-like"/>
    <property type="match status" value="1"/>
</dbReference>